<sequence length="510" mass="55188">MDIRAAEISAILKEQIQNFGREAEVSEVGQVLSVGDGIARVYGLDNVQAGEMVEFENGTRGMALNLEIDNVGVVIFGSDRDIKEGQTVKRTGAIVDVPVGRGLLGRVVDALGNPIDGKGPIEATERRRVDVKAPGIIPRKSVHEPMQTGLKAIDALIPIGRGQRELIIGDRQTGKTAVALDAILNQKPLNVAGAPESQKLYCVYVAVGQKRSTVAQFVKVLEEQGALEYSIVVAATASDPAPMQFLAPFAGTAMGEYFRDNGMHALIIHDDLSKQAVAYRQMSLLLRRPPGREAYPGDVFYLHSRLLERAAKLNDENGAGSLTALPVIETQANDVSAYIPTNVISITDGQIFLESDLFYQGIRPAVNVGLSVSRVGSSAQIKAMKQVAGKIKGELAQYRELAAFAQFGSDLDASTQKLLNRGARLTELLKQSQFSPLKVEEQVVVIYAGTNGYLDNLPLNKVREFEAGFLLAMRTQHQDLLDTIRTSKELSKDSIANLTKALDAFAKSFA</sequence>
<accession>A8HS15</accession>
<evidence type="ECO:0000255" key="1">
    <source>
        <dbReference type="HAMAP-Rule" id="MF_01346"/>
    </source>
</evidence>
<comment type="function">
    <text evidence="1">Produces ATP from ADP in the presence of a proton gradient across the membrane. The alpha chain is a regulatory subunit.</text>
</comment>
<comment type="catalytic activity">
    <reaction evidence="1">
        <text>ATP + H2O + 4 H(+)(in) = ADP + phosphate + 5 H(+)(out)</text>
        <dbReference type="Rhea" id="RHEA:57720"/>
        <dbReference type="ChEBI" id="CHEBI:15377"/>
        <dbReference type="ChEBI" id="CHEBI:15378"/>
        <dbReference type="ChEBI" id="CHEBI:30616"/>
        <dbReference type="ChEBI" id="CHEBI:43474"/>
        <dbReference type="ChEBI" id="CHEBI:456216"/>
        <dbReference type="EC" id="7.1.2.2"/>
    </reaction>
</comment>
<comment type="subunit">
    <text evidence="1">F-type ATPases have 2 components, CF(1) - the catalytic core - and CF(0) - the membrane proton channel. CF(1) has five subunits: alpha(3), beta(3), gamma(1), delta(1), epsilon(1). CF(0) has three main subunits: a(1), b(2) and c(9-12). The alpha and beta chains form an alternating ring which encloses part of the gamma chain. CF(1) is attached to CF(0) by a central stalk formed by the gamma and epsilon chains, while a peripheral stalk is formed by the delta and b chains.</text>
</comment>
<comment type="subcellular location">
    <subcellularLocation>
        <location evidence="1">Cell inner membrane</location>
        <topology evidence="1">Peripheral membrane protein</topology>
    </subcellularLocation>
</comment>
<comment type="similarity">
    <text evidence="1">Belongs to the ATPase alpha/beta chains family.</text>
</comment>
<feature type="chain" id="PRO_1000073350" description="ATP synthase subunit alpha">
    <location>
        <begin position="1"/>
        <end position="510"/>
    </location>
</feature>
<feature type="binding site" evidence="1">
    <location>
        <begin position="169"/>
        <end position="176"/>
    </location>
    <ligand>
        <name>ATP</name>
        <dbReference type="ChEBI" id="CHEBI:30616"/>
    </ligand>
</feature>
<feature type="site" description="Required for activity" evidence="1">
    <location>
        <position position="371"/>
    </location>
</feature>
<protein>
    <recommendedName>
        <fullName evidence="1">ATP synthase subunit alpha</fullName>
        <ecNumber evidence="1">7.1.2.2</ecNumber>
    </recommendedName>
    <alternativeName>
        <fullName evidence="1">ATP synthase F1 sector subunit alpha</fullName>
    </alternativeName>
    <alternativeName>
        <fullName evidence="1">F-ATPase subunit alpha</fullName>
    </alternativeName>
</protein>
<dbReference type="EC" id="7.1.2.2" evidence="1"/>
<dbReference type="EMBL" id="AP009384">
    <property type="protein sequence ID" value="BAF90125.1"/>
    <property type="molecule type" value="Genomic_DNA"/>
</dbReference>
<dbReference type="RefSeq" id="WP_012172647.1">
    <property type="nucleotide sequence ID" value="NC_009937.1"/>
</dbReference>
<dbReference type="SMR" id="A8HS15"/>
<dbReference type="STRING" id="438753.AZC_4127"/>
<dbReference type="KEGG" id="azc:AZC_4127"/>
<dbReference type="eggNOG" id="COG0056">
    <property type="taxonomic scope" value="Bacteria"/>
</dbReference>
<dbReference type="HOGENOM" id="CLU_010091_2_1_5"/>
<dbReference type="Proteomes" id="UP000000270">
    <property type="component" value="Chromosome"/>
</dbReference>
<dbReference type="GO" id="GO:0005886">
    <property type="term" value="C:plasma membrane"/>
    <property type="evidence" value="ECO:0007669"/>
    <property type="project" value="UniProtKB-SubCell"/>
</dbReference>
<dbReference type="GO" id="GO:0045259">
    <property type="term" value="C:proton-transporting ATP synthase complex"/>
    <property type="evidence" value="ECO:0007669"/>
    <property type="project" value="UniProtKB-KW"/>
</dbReference>
<dbReference type="GO" id="GO:0043531">
    <property type="term" value="F:ADP binding"/>
    <property type="evidence" value="ECO:0007669"/>
    <property type="project" value="TreeGrafter"/>
</dbReference>
<dbReference type="GO" id="GO:0005524">
    <property type="term" value="F:ATP binding"/>
    <property type="evidence" value="ECO:0007669"/>
    <property type="project" value="UniProtKB-UniRule"/>
</dbReference>
<dbReference type="GO" id="GO:0046933">
    <property type="term" value="F:proton-transporting ATP synthase activity, rotational mechanism"/>
    <property type="evidence" value="ECO:0007669"/>
    <property type="project" value="UniProtKB-UniRule"/>
</dbReference>
<dbReference type="CDD" id="cd18113">
    <property type="entry name" value="ATP-synt_F1_alpha_C"/>
    <property type="match status" value="1"/>
</dbReference>
<dbReference type="CDD" id="cd18116">
    <property type="entry name" value="ATP-synt_F1_alpha_N"/>
    <property type="match status" value="1"/>
</dbReference>
<dbReference type="CDD" id="cd01132">
    <property type="entry name" value="F1-ATPase_alpha_CD"/>
    <property type="match status" value="1"/>
</dbReference>
<dbReference type="FunFam" id="1.20.150.20:FF:000001">
    <property type="entry name" value="ATP synthase subunit alpha"/>
    <property type="match status" value="1"/>
</dbReference>
<dbReference type="FunFam" id="2.40.30.20:FF:000001">
    <property type="entry name" value="ATP synthase subunit alpha"/>
    <property type="match status" value="1"/>
</dbReference>
<dbReference type="FunFam" id="3.40.50.300:FF:002432">
    <property type="entry name" value="ATP synthase subunit alpha, mitochondrial"/>
    <property type="match status" value="1"/>
</dbReference>
<dbReference type="Gene3D" id="2.40.30.20">
    <property type="match status" value="1"/>
</dbReference>
<dbReference type="Gene3D" id="1.20.150.20">
    <property type="entry name" value="ATP synthase alpha/beta chain, C-terminal domain"/>
    <property type="match status" value="1"/>
</dbReference>
<dbReference type="Gene3D" id="3.40.50.300">
    <property type="entry name" value="P-loop containing nucleotide triphosphate hydrolases"/>
    <property type="match status" value="1"/>
</dbReference>
<dbReference type="HAMAP" id="MF_01346">
    <property type="entry name" value="ATP_synth_alpha_bact"/>
    <property type="match status" value="1"/>
</dbReference>
<dbReference type="InterPro" id="IPR023366">
    <property type="entry name" value="ATP_synth_asu-like_sf"/>
</dbReference>
<dbReference type="InterPro" id="IPR000793">
    <property type="entry name" value="ATP_synth_asu_C"/>
</dbReference>
<dbReference type="InterPro" id="IPR038376">
    <property type="entry name" value="ATP_synth_asu_C_sf"/>
</dbReference>
<dbReference type="InterPro" id="IPR033732">
    <property type="entry name" value="ATP_synth_F1_a_nt-bd_dom"/>
</dbReference>
<dbReference type="InterPro" id="IPR005294">
    <property type="entry name" value="ATP_synth_F1_asu"/>
</dbReference>
<dbReference type="InterPro" id="IPR020003">
    <property type="entry name" value="ATPase_a/bsu_AS"/>
</dbReference>
<dbReference type="InterPro" id="IPR004100">
    <property type="entry name" value="ATPase_F1/V1/A1_a/bsu_N"/>
</dbReference>
<dbReference type="InterPro" id="IPR036121">
    <property type="entry name" value="ATPase_F1/V1/A1_a/bsu_N_sf"/>
</dbReference>
<dbReference type="InterPro" id="IPR000194">
    <property type="entry name" value="ATPase_F1/V1/A1_a/bsu_nucl-bd"/>
</dbReference>
<dbReference type="InterPro" id="IPR027417">
    <property type="entry name" value="P-loop_NTPase"/>
</dbReference>
<dbReference type="NCBIfam" id="TIGR00962">
    <property type="entry name" value="atpA"/>
    <property type="match status" value="1"/>
</dbReference>
<dbReference type="NCBIfam" id="NF009884">
    <property type="entry name" value="PRK13343.1"/>
    <property type="match status" value="1"/>
</dbReference>
<dbReference type="PANTHER" id="PTHR48082">
    <property type="entry name" value="ATP SYNTHASE SUBUNIT ALPHA, MITOCHONDRIAL"/>
    <property type="match status" value="1"/>
</dbReference>
<dbReference type="PANTHER" id="PTHR48082:SF2">
    <property type="entry name" value="ATP SYNTHASE SUBUNIT ALPHA, MITOCHONDRIAL"/>
    <property type="match status" value="1"/>
</dbReference>
<dbReference type="Pfam" id="PF00006">
    <property type="entry name" value="ATP-synt_ab"/>
    <property type="match status" value="1"/>
</dbReference>
<dbReference type="Pfam" id="PF00306">
    <property type="entry name" value="ATP-synt_ab_C"/>
    <property type="match status" value="1"/>
</dbReference>
<dbReference type="Pfam" id="PF02874">
    <property type="entry name" value="ATP-synt_ab_N"/>
    <property type="match status" value="1"/>
</dbReference>
<dbReference type="PIRSF" id="PIRSF039088">
    <property type="entry name" value="F_ATPase_subunit_alpha"/>
    <property type="match status" value="1"/>
</dbReference>
<dbReference type="SUPFAM" id="SSF47917">
    <property type="entry name" value="C-terminal domain of alpha and beta subunits of F1 ATP synthase"/>
    <property type="match status" value="1"/>
</dbReference>
<dbReference type="SUPFAM" id="SSF50615">
    <property type="entry name" value="N-terminal domain of alpha and beta subunits of F1 ATP synthase"/>
    <property type="match status" value="1"/>
</dbReference>
<dbReference type="SUPFAM" id="SSF52540">
    <property type="entry name" value="P-loop containing nucleoside triphosphate hydrolases"/>
    <property type="match status" value="1"/>
</dbReference>
<dbReference type="PROSITE" id="PS00152">
    <property type="entry name" value="ATPASE_ALPHA_BETA"/>
    <property type="match status" value="1"/>
</dbReference>
<proteinExistence type="inferred from homology"/>
<reference key="1">
    <citation type="submission" date="2007-04" db="EMBL/GenBank/DDBJ databases">
        <title>Complete genome sequence of the nitrogen-fixing bacterium Azorhizobium caulinodans ORS571.</title>
        <authorList>
            <person name="Lee K.B."/>
            <person name="Backer P.D."/>
            <person name="Aono T."/>
            <person name="Liu C.T."/>
            <person name="Suzuki S."/>
            <person name="Suzuki T."/>
            <person name="Kaneko T."/>
            <person name="Yamada M."/>
            <person name="Tabata S."/>
            <person name="Kupfer D.M."/>
            <person name="Najar F.Z."/>
            <person name="Wiley G.B."/>
            <person name="Roe B."/>
            <person name="Binnewies T."/>
            <person name="Ussery D."/>
            <person name="Vereecke D."/>
            <person name="Gevers D."/>
            <person name="Holsters M."/>
            <person name="Oyaizu H."/>
        </authorList>
    </citation>
    <scope>NUCLEOTIDE SEQUENCE [LARGE SCALE GENOMIC DNA]</scope>
    <source>
        <strain>ATCC 43989 / DSM 5975 / JCM 20966 / LMG 6465 / NBRC 14845 / NCIMB 13405 / ORS 571</strain>
    </source>
</reference>
<name>ATPA_AZOC5</name>
<gene>
    <name evidence="1" type="primary">atpA</name>
    <name type="ordered locus">AZC_4127</name>
</gene>
<keyword id="KW-0066">ATP synthesis</keyword>
<keyword id="KW-0067">ATP-binding</keyword>
<keyword id="KW-0997">Cell inner membrane</keyword>
<keyword id="KW-1003">Cell membrane</keyword>
<keyword id="KW-0139">CF(1)</keyword>
<keyword id="KW-0375">Hydrogen ion transport</keyword>
<keyword id="KW-0406">Ion transport</keyword>
<keyword id="KW-0472">Membrane</keyword>
<keyword id="KW-0547">Nucleotide-binding</keyword>
<keyword id="KW-1185">Reference proteome</keyword>
<keyword id="KW-1278">Translocase</keyword>
<keyword id="KW-0813">Transport</keyword>
<organism>
    <name type="scientific">Azorhizobium caulinodans (strain ATCC 43989 / DSM 5975 / JCM 20966 / LMG 6465 / NBRC 14845 / NCIMB 13405 / ORS 571)</name>
    <dbReference type="NCBI Taxonomy" id="438753"/>
    <lineage>
        <taxon>Bacteria</taxon>
        <taxon>Pseudomonadati</taxon>
        <taxon>Pseudomonadota</taxon>
        <taxon>Alphaproteobacteria</taxon>
        <taxon>Hyphomicrobiales</taxon>
        <taxon>Xanthobacteraceae</taxon>
        <taxon>Azorhizobium</taxon>
    </lineage>
</organism>